<accession>O87125</accession>
<protein>
    <recommendedName>
        <fullName evidence="1">Protein-glutamate methylesterase/protein-glutamine glutaminase 1</fullName>
        <ecNumber evidence="1">3.1.1.61</ecNumber>
        <ecNumber evidence="1">3.5.1.44</ecNumber>
    </recommendedName>
</protein>
<reference key="1">
    <citation type="journal article" date="1999" name="Biosci. Biotechnol. Biochem.">
        <title>Cloning and characterization of chemotaxis genes in Pseudomonas aeruginosa.</title>
        <authorList>
            <person name="Kato J."/>
            <person name="Nakamura T."/>
            <person name="Kuroda A."/>
            <person name="Ohtake H."/>
        </authorList>
    </citation>
    <scope>NUCLEOTIDE SEQUENCE [GENOMIC DNA]</scope>
    <source>
        <strain>ATCC 15692 / DSM 22644 / CIP 104116 / JCM 14847 / LMG 12228 / 1C / PRS 101 / PAO1</strain>
    </source>
</reference>
<reference key="2">
    <citation type="journal article" date="2000" name="Nature">
        <title>Complete genome sequence of Pseudomonas aeruginosa PAO1, an opportunistic pathogen.</title>
        <authorList>
            <person name="Stover C.K."/>
            <person name="Pham X.-Q.T."/>
            <person name="Erwin A.L."/>
            <person name="Mizoguchi S.D."/>
            <person name="Warrener P."/>
            <person name="Hickey M.J."/>
            <person name="Brinkman F.S.L."/>
            <person name="Hufnagle W.O."/>
            <person name="Kowalik D.J."/>
            <person name="Lagrou M."/>
            <person name="Garber R.L."/>
            <person name="Goltry L."/>
            <person name="Tolentino E."/>
            <person name="Westbrock-Wadman S."/>
            <person name="Yuan Y."/>
            <person name="Brody L.L."/>
            <person name="Coulter S.N."/>
            <person name="Folger K.R."/>
            <person name="Kas A."/>
            <person name="Larbig K."/>
            <person name="Lim R.M."/>
            <person name="Smith K.A."/>
            <person name="Spencer D.H."/>
            <person name="Wong G.K.-S."/>
            <person name="Wu Z."/>
            <person name="Paulsen I.T."/>
            <person name="Reizer J."/>
            <person name="Saier M.H. Jr."/>
            <person name="Hancock R.E.W."/>
            <person name="Lory S."/>
            <person name="Olson M.V."/>
        </authorList>
    </citation>
    <scope>NUCLEOTIDE SEQUENCE [LARGE SCALE GENOMIC DNA]</scope>
    <source>
        <strain>ATCC 15692 / DSM 22644 / CIP 104116 / JCM 14847 / LMG 12228 / 1C / PRS 101 / PAO1</strain>
    </source>
</reference>
<reference key="3">
    <citation type="journal article" date="2002" name="J. Bacteriol.">
        <title>Cluster II che genes from Pseudomonas aeruginosa are required for an optimal chemotactic response.</title>
        <authorList>
            <person name="Ferrandez A."/>
            <person name="Hawkins A.C."/>
            <person name="Summerfield D.T."/>
            <person name="Harwood C.S."/>
        </authorList>
    </citation>
    <scope>FUNCTION IN CHEMOTAXIS</scope>
    <scope>DISRUPTION PHENOTYPE</scope>
    <source>
        <strain>ATCC 15692 / DSM 22644 / CIP 104116 / JCM 14847 / LMG 12228 / 1C / PRS 101 / PAO1</strain>
    </source>
</reference>
<reference key="4">
    <citation type="journal article" date="2009" name="PLoS Pathog.">
        <title>Caenorhabditis elegans semi-automated liquid screen reveals a specialized role for the chemotaxis gene cheB2 in Pseudomonas aeruginosa virulence.</title>
        <authorList>
            <person name="Garvis S."/>
            <person name="Munder A."/>
            <person name="Ball G."/>
            <person name="de Bentzmann S."/>
            <person name="Wiehlmann L."/>
            <person name="Ewbank J.J."/>
            <person name="Tuemmler B."/>
            <person name="Filloux A."/>
        </authorList>
    </citation>
    <scope>DISRUPTION PHENOTYPE</scope>
    <source>
        <strain>TBCF10839</strain>
    </source>
</reference>
<sequence>MAVKVLVVDDSGFFRRRVSEILSADGQIQVVGTGTNGREAIEQALALRPDVITMDYEMPLMDGITAVRNIMQRCPTPVLMFSSLTHEGARVTLDALDAGAVDYLPKNFEDISRNPDKVRQLLCEKVLTIARSNRRSISLPPLPSATSSSHAPASSSSVGASARVGAGASPAPASTSAAPKRKAYRLVAIGTSTGGPVALQRVLTQLPANFPAPLVLIQHMPAAFTKAFAERLDKLCRINVKEAEDGDILRPGLALLAPGGKQMMVDGRGTVRILPGDERLNYKPCVDVTFGSAAKAYNDKVLAVVLTGMGADGREGARLLKQGGSQVWAQDEASCVIYGMPMAVVKANLADAVYGLDDIGRHLVEACQ</sequence>
<keyword id="KW-0145">Chemotaxis</keyword>
<keyword id="KW-0963">Cytoplasm</keyword>
<keyword id="KW-0378">Hydrolase</keyword>
<keyword id="KW-0597">Phosphoprotein</keyword>
<keyword id="KW-1185">Reference proteome</keyword>
<gene>
    <name evidence="1" type="primary">cheB1</name>
    <name evidence="5" type="synonym">cheB</name>
    <name type="ordered locus">PA1459</name>
</gene>
<proteinExistence type="evidence at protein level"/>
<dbReference type="EC" id="3.1.1.61" evidence="1"/>
<dbReference type="EC" id="3.5.1.44" evidence="1"/>
<dbReference type="EMBL" id="AB012767">
    <property type="protein sequence ID" value="BAA33550.1"/>
    <property type="molecule type" value="Genomic_DNA"/>
</dbReference>
<dbReference type="EMBL" id="AE004091">
    <property type="protein sequence ID" value="AAG04848.1"/>
    <property type="molecule type" value="Genomic_DNA"/>
</dbReference>
<dbReference type="PIR" id="G83463">
    <property type="entry name" value="G83463"/>
</dbReference>
<dbReference type="PIR" id="T46615">
    <property type="entry name" value="T46615"/>
</dbReference>
<dbReference type="RefSeq" id="NP_250150.1">
    <property type="nucleotide sequence ID" value="NC_002516.2"/>
</dbReference>
<dbReference type="RefSeq" id="WP_010895569.1">
    <property type="nucleotide sequence ID" value="NC_002516.2"/>
</dbReference>
<dbReference type="SMR" id="O87125"/>
<dbReference type="STRING" id="208964.PA1459"/>
<dbReference type="PaxDb" id="208964-PA1459"/>
<dbReference type="DNASU" id="882084"/>
<dbReference type="GeneID" id="882084"/>
<dbReference type="KEGG" id="pae:PA1459"/>
<dbReference type="PATRIC" id="fig|208964.12.peg.1510"/>
<dbReference type="PseudoCAP" id="PA1459"/>
<dbReference type="HOGENOM" id="CLU_000445_51_0_6"/>
<dbReference type="InParanoid" id="O87125"/>
<dbReference type="OrthoDB" id="9793421at2"/>
<dbReference type="PhylomeDB" id="O87125"/>
<dbReference type="BioCyc" id="PAER208964:G1FZ6-1485-MONOMER"/>
<dbReference type="Proteomes" id="UP000002438">
    <property type="component" value="Chromosome"/>
</dbReference>
<dbReference type="GO" id="GO:0005737">
    <property type="term" value="C:cytoplasm"/>
    <property type="evidence" value="ECO:0007669"/>
    <property type="project" value="UniProtKB-SubCell"/>
</dbReference>
<dbReference type="GO" id="GO:0000156">
    <property type="term" value="F:phosphorelay response regulator activity"/>
    <property type="evidence" value="ECO:0007669"/>
    <property type="project" value="InterPro"/>
</dbReference>
<dbReference type="GO" id="GO:0008984">
    <property type="term" value="F:protein-glutamate methylesterase activity"/>
    <property type="evidence" value="ECO:0007669"/>
    <property type="project" value="UniProtKB-UniRule"/>
</dbReference>
<dbReference type="GO" id="GO:0050568">
    <property type="term" value="F:protein-glutamine glutaminase activity"/>
    <property type="evidence" value="ECO:0007669"/>
    <property type="project" value="UniProtKB-UniRule"/>
</dbReference>
<dbReference type="GO" id="GO:0006935">
    <property type="term" value="P:chemotaxis"/>
    <property type="evidence" value="ECO:0007669"/>
    <property type="project" value="UniProtKB-UniRule"/>
</dbReference>
<dbReference type="CDD" id="cd16432">
    <property type="entry name" value="CheB_Rec"/>
    <property type="match status" value="1"/>
</dbReference>
<dbReference type="CDD" id="cd17541">
    <property type="entry name" value="REC_CheB-like"/>
    <property type="match status" value="1"/>
</dbReference>
<dbReference type="FunFam" id="3.40.50.2300:FF:000077">
    <property type="entry name" value="Chemotaxis response regulator"/>
    <property type="match status" value="1"/>
</dbReference>
<dbReference type="FunFam" id="3.40.50.180:FF:000001">
    <property type="entry name" value="Protein-glutamate methylesterase/protein-glutamine glutaminase"/>
    <property type="match status" value="1"/>
</dbReference>
<dbReference type="Gene3D" id="3.40.50.2300">
    <property type="match status" value="1"/>
</dbReference>
<dbReference type="Gene3D" id="3.40.50.180">
    <property type="entry name" value="Methylesterase CheB, C-terminal domain"/>
    <property type="match status" value="1"/>
</dbReference>
<dbReference type="HAMAP" id="MF_00099">
    <property type="entry name" value="CheB_chemtxs"/>
    <property type="match status" value="1"/>
</dbReference>
<dbReference type="InterPro" id="IPR008248">
    <property type="entry name" value="CheB-like"/>
</dbReference>
<dbReference type="InterPro" id="IPR035909">
    <property type="entry name" value="CheB_C"/>
</dbReference>
<dbReference type="InterPro" id="IPR011006">
    <property type="entry name" value="CheY-like_superfamily"/>
</dbReference>
<dbReference type="InterPro" id="IPR000673">
    <property type="entry name" value="Sig_transdc_resp-reg_Me-estase"/>
</dbReference>
<dbReference type="InterPro" id="IPR001789">
    <property type="entry name" value="Sig_transdc_resp-reg_receiver"/>
</dbReference>
<dbReference type="NCBIfam" id="NF001965">
    <property type="entry name" value="PRK00742.1"/>
    <property type="match status" value="1"/>
</dbReference>
<dbReference type="PANTHER" id="PTHR42872">
    <property type="entry name" value="PROTEIN-GLUTAMATE METHYLESTERASE/PROTEIN-GLUTAMINE GLUTAMINASE"/>
    <property type="match status" value="1"/>
</dbReference>
<dbReference type="PANTHER" id="PTHR42872:SF3">
    <property type="entry name" value="PROTEIN-GLUTAMATE METHYLESTERASE_PROTEIN-GLUTAMINE GLUTAMINASE 1"/>
    <property type="match status" value="1"/>
</dbReference>
<dbReference type="Pfam" id="PF01339">
    <property type="entry name" value="CheB_methylest"/>
    <property type="match status" value="1"/>
</dbReference>
<dbReference type="Pfam" id="PF00072">
    <property type="entry name" value="Response_reg"/>
    <property type="match status" value="1"/>
</dbReference>
<dbReference type="PIRSF" id="PIRSF000876">
    <property type="entry name" value="RR_chemtxs_CheB"/>
    <property type="match status" value="1"/>
</dbReference>
<dbReference type="SMART" id="SM00448">
    <property type="entry name" value="REC"/>
    <property type="match status" value="1"/>
</dbReference>
<dbReference type="SUPFAM" id="SSF52172">
    <property type="entry name" value="CheY-like"/>
    <property type="match status" value="1"/>
</dbReference>
<dbReference type="SUPFAM" id="SSF52738">
    <property type="entry name" value="Methylesterase CheB, C-terminal domain"/>
    <property type="match status" value="1"/>
</dbReference>
<dbReference type="PROSITE" id="PS50122">
    <property type="entry name" value="CHEB"/>
    <property type="match status" value="1"/>
</dbReference>
<dbReference type="PROSITE" id="PS50110">
    <property type="entry name" value="RESPONSE_REGULATORY"/>
    <property type="match status" value="1"/>
</dbReference>
<organism>
    <name type="scientific">Pseudomonas aeruginosa (strain ATCC 15692 / DSM 22644 / CIP 104116 / JCM 14847 / LMG 12228 / 1C / PRS 101 / PAO1)</name>
    <dbReference type="NCBI Taxonomy" id="208964"/>
    <lineage>
        <taxon>Bacteria</taxon>
        <taxon>Pseudomonadati</taxon>
        <taxon>Pseudomonadota</taxon>
        <taxon>Gammaproteobacteria</taxon>
        <taxon>Pseudomonadales</taxon>
        <taxon>Pseudomonadaceae</taxon>
        <taxon>Pseudomonas</taxon>
    </lineage>
</organism>
<feature type="chain" id="PRO_0000158008" description="Protein-glutamate methylesterase/protein-glutamine glutaminase 1">
    <location>
        <begin position="1"/>
        <end position="368"/>
    </location>
</feature>
<feature type="domain" description="Response regulatory" evidence="1">
    <location>
        <begin position="4"/>
        <end position="121"/>
    </location>
</feature>
<feature type="domain" description="CheB-type methylesterase" evidence="1">
    <location>
        <begin position="172"/>
        <end position="368"/>
    </location>
</feature>
<feature type="region of interest" description="Disordered" evidence="2">
    <location>
        <begin position="138"/>
        <end position="176"/>
    </location>
</feature>
<feature type="compositionally biased region" description="Low complexity" evidence="2">
    <location>
        <begin position="144"/>
        <end position="176"/>
    </location>
</feature>
<feature type="active site" evidence="1">
    <location>
        <position position="192"/>
    </location>
</feature>
<feature type="active site" evidence="1">
    <location>
        <position position="219"/>
    </location>
</feature>
<feature type="active site" evidence="1">
    <location>
        <position position="312"/>
    </location>
</feature>
<feature type="modified residue" description="4-aspartylphosphate" evidence="1">
    <location>
        <position position="55"/>
    </location>
</feature>
<feature type="sequence conflict" description="In Ref. 1; BAA33550." evidence="6" ref="1">
    <original>G</original>
    <variation>A</variation>
    <location>
        <position position="34"/>
    </location>
</feature>
<evidence type="ECO:0000255" key="1">
    <source>
        <dbReference type="HAMAP-Rule" id="MF_00099"/>
    </source>
</evidence>
<evidence type="ECO:0000256" key="2">
    <source>
        <dbReference type="SAM" id="MobiDB-lite"/>
    </source>
</evidence>
<evidence type="ECO:0000269" key="3">
    <source>
    </source>
</evidence>
<evidence type="ECO:0000269" key="4">
    <source>
    </source>
</evidence>
<evidence type="ECO:0000303" key="5">
    <source>
    </source>
</evidence>
<evidence type="ECO:0000305" key="6"/>
<name>CHEB1_PSEAE</name>
<comment type="function">
    <text evidence="1">Involved in chemotaxis. Part of a chemotaxis signal transduction system that modulates chemotaxis in response to various stimuli. Catalyzes the demethylation of specific methylglutamate residues introduced into the chemoreceptors (methyl-accepting chemotaxis proteins or MCP) by CheR. Also mediates the irreversible deamidation of specific glutamine residues to glutamic acid.</text>
</comment>
<comment type="catalytic activity">
    <reaction evidence="1">
        <text>[protein]-L-glutamate 5-O-methyl ester + H2O = L-glutamyl-[protein] + methanol + H(+)</text>
        <dbReference type="Rhea" id="RHEA:23236"/>
        <dbReference type="Rhea" id="RHEA-COMP:10208"/>
        <dbReference type="Rhea" id="RHEA-COMP:10311"/>
        <dbReference type="ChEBI" id="CHEBI:15377"/>
        <dbReference type="ChEBI" id="CHEBI:15378"/>
        <dbReference type="ChEBI" id="CHEBI:17790"/>
        <dbReference type="ChEBI" id="CHEBI:29973"/>
        <dbReference type="ChEBI" id="CHEBI:82795"/>
        <dbReference type="EC" id="3.1.1.61"/>
    </reaction>
</comment>
<comment type="catalytic activity">
    <reaction evidence="1">
        <text>L-glutaminyl-[protein] + H2O = L-glutamyl-[protein] + NH4(+)</text>
        <dbReference type="Rhea" id="RHEA:16441"/>
        <dbReference type="Rhea" id="RHEA-COMP:10207"/>
        <dbReference type="Rhea" id="RHEA-COMP:10208"/>
        <dbReference type="ChEBI" id="CHEBI:15377"/>
        <dbReference type="ChEBI" id="CHEBI:28938"/>
        <dbReference type="ChEBI" id="CHEBI:29973"/>
        <dbReference type="ChEBI" id="CHEBI:30011"/>
        <dbReference type="EC" id="3.5.1.44"/>
    </reaction>
</comment>
<comment type="subcellular location">
    <subcellularLocation>
        <location evidence="1">Cytoplasm</location>
    </subcellularLocation>
</comment>
<comment type="domain">
    <text evidence="1">Contains a C-terminal catalytic domain, and an N-terminal region which modulates catalytic activity.</text>
</comment>
<comment type="PTM">
    <text evidence="1">Phosphorylated by CheA. Phosphorylation of the N-terminal regulatory domain activates the methylesterase activity.</text>
</comment>
<comment type="disruption phenotype">
    <text evidence="3 4">Deletion mutant is nonchemotactic (PubMed:12142407). Mutant is not attenuated for virulence in C.elegans whereas in vitro motility and chemotaxis are severely impaired (PubMed:19662168).</text>
</comment>
<comment type="similarity">
    <text evidence="1">Belongs to the CheB family.</text>
</comment>